<keyword id="KW-0687">Ribonucleoprotein</keyword>
<keyword id="KW-0689">Ribosomal protein</keyword>
<keyword id="KW-0694">RNA-binding</keyword>
<keyword id="KW-0699">rRNA-binding</keyword>
<reference key="1">
    <citation type="journal article" date="2010" name="J. Bacteriol.">
        <title>Genome sequence of the deep-rooted Yersinia pestis strain Angola reveals new insights into the evolution and pangenome of the plague bacterium.</title>
        <authorList>
            <person name="Eppinger M."/>
            <person name="Worsham P.L."/>
            <person name="Nikolich M.P."/>
            <person name="Riley D.R."/>
            <person name="Sebastian Y."/>
            <person name="Mou S."/>
            <person name="Achtman M."/>
            <person name="Lindler L.E."/>
            <person name="Ravel J."/>
        </authorList>
    </citation>
    <scope>NUCLEOTIDE SEQUENCE [LARGE SCALE GENOMIC DNA]</scope>
    <source>
        <strain>Angola</strain>
    </source>
</reference>
<comment type="function">
    <text evidence="1">Binds directly to 23S ribosomal RNA and is necessary for the in vitro assembly process of the 50S ribosomal subunit. It is not involved in the protein synthesizing functions of that subunit.</text>
</comment>
<comment type="similarity">
    <text evidence="1">Belongs to the bacterial ribosomal protein bL20 family.</text>
</comment>
<organism>
    <name type="scientific">Yersinia pestis bv. Antiqua (strain Angola)</name>
    <dbReference type="NCBI Taxonomy" id="349746"/>
    <lineage>
        <taxon>Bacteria</taxon>
        <taxon>Pseudomonadati</taxon>
        <taxon>Pseudomonadota</taxon>
        <taxon>Gammaproteobacteria</taxon>
        <taxon>Enterobacterales</taxon>
        <taxon>Yersiniaceae</taxon>
        <taxon>Yersinia</taxon>
    </lineage>
</organism>
<gene>
    <name evidence="1" type="primary">rplT</name>
    <name type="ordered locus">YpAngola_A2622</name>
</gene>
<sequence length="118" mass="13511">MARVKRGVIARARHKKILKQAKGYYGARSRVYRVAFQAVIKAGQYAYRDRRQRKRQFRQLWIARINAAARQNGLSYSRFINGLKKASVEIDRKILADIAVFDKVAFSALVEKAKAALA</sequence>
<name>RL20_YERPG</name>
<evidence type="ECO:0000255" key="1">
    <source>
        <dbReference type="HAMAP-Rule" id="MF_00382"/>
    </source>
</evidence>
<evidence type="ECO:0000305" key="2"/>
<dbReference type="EMBL" id="CP000901">
    <property type="protein sequence ID" value="ABX86638.1"/>
    <property type="molecule type" value="Genomic_DNA"/>
</dbReference>
<dbReference type="RefSeq" id="WP_002211833.1">
    <property type="nucleotide sequence ID" value="NZ_CP009935.1"/>
</dbReference>
<dbReference type="SMR" id="A9R0A5"/>
<dbReference type="GeneID" id="96665819"/>
<dbReference type="KEGG" id="ypg:YpAngola_A2622"/>
<dbReference type="PATRIC" id="fig|349746.12.peg.3649"/>
<dbReference type="GO" id="GO:1990904">
    <property type="term" value="C:ribonucleoprotein complex"/>
    <property type="evidence" value="ECO:0007669"/>
    <property type="project" value="UniProtKB-KW"/>
</dbReference>
<dbReference type="GO" id="GO:0005840">
    <property type="term" value="C:ribosome"/>
    <property type="evidence" value="ECO:0007669"/>
    <property type="project" value="UniProtKB-KW"/>
</dbReference>
<dbReference type="GO" id="GO:0019843">
    <property type="term" value="F:rRNA binding"/>
    <property type="evidence" value="ECO:0007669"/>
    <property type="project" value="UniProtKB-UniRule"/>
</dbReference>
<dbReference type="GO" id="GO:0003735">
    <property type="term" value="F:structural constituent of ribosome"/>
    <property type="evidence" value="ECO:0007669"/>
    <property type="project" value="InterPro"/>
</dbReference>
<dbReference type="GO" id="GO:0000027">
    <property type="term" value="P:ribosomal large subunit assembly"/>
    <property type="evidence" value="ECO:0007669"/>
    <property type="project" value="UniProtKB-UniRule"/>
</dbReference>
<dbReference type="GO" id="GO:0006412">
    <property type="term" value="P:translation"/>
    <property type="evidence" value="ECO:0007669"/>
    <property type="project" value="InterPro"/>
</dbReference>
<dbReference type="CDD" id="cd07026">
    <property type="entry name" value="Ribosomal_L20"/>
    <property type="match status" value="1"/>
</dbReference>
<dbReference type="FunFam" id="1.10.1900.20:FF:000001">
    <property type="entry name" value="50S ribosomal protein L20"/>
    <property type="match status" value="1"/>
</dbReference>
<dbReference type="Gene3D" id="6.10.160.10">
    <property type="match status" value="1"/>
</dbReference>
<dbReference type="Gene3D" id="1.10.1900.20">
    <property type="entry name" value="Ribosomal protein L20"/>
    <property type="match status" value="1"/>
</dbReference>
<dbReference type="HAMAP" id="MF_00382">
    <property type="entry name" value="Ribosomal_bL20"/>
    <property type="match status" value="1"/>
</dbReference>
<dbReference type="InterPro" id="IPR005813">
    <property type="entry name" value="Ribosomal_bL20"/>
</dbReference>
<dbReference type="InterPro" id="IPR049946">
    <property type="entry name" value="RIBOSOMAL_L20_CS"/>
</dbReference>
<dbReference type="InterPro" id="IPR035566">
    <property type="entry name" value="Ribosomal_protein_bL20_C"/>
</dbReference>
<dbReference type="NCBIfam" id="TIGR01032">
    <property type="entry name" value="rplT_bact"/>
    <property type="match status" value="1"/>
</dbReference>
<dbReference type="PANTHER" id="PTHR10986">
    <property type="entry name" value="39S RIBOSOMAL PROTEIN L20"/>
    <property type="match status" value="1"/>
</dbReference>
<dbReference type="Pfam" id="PF00453">
    <property type="entry name" value="Ribosomal_L20"/>
    <property type="match status" value="1"/>
</dbReference>
<dbReference type="PRINTS" id="PR00062">
    <property type="entry name" value="RIBOSOMALL20"/>
</dbReference>
<dbReference type="SUPFAM" id="SSF74731">
    <property type="entry name" value="Ribosomal protein L20"/>
    <property type="match status" value="1"/>
</dbReference>
<dbReference type="PROSITE" id="PS00937">
    <property type="entry name" value="RIBOSOMAL_L20"/>
    <property type="match status" value="1"/>
</dbReference>
<protein>
    <recommendedName>
        <fullName evidence="1">Large ribosomal subunit protein bL20</fullName>
    </recommendedName>
    <alternativeName>
        <fullName evidence="2">50S ribosomal protein L20</fullName>
    </alternativeName>
</protein>
<proteinExistence type="inferred from homology"/>
<accession>A9R0A5</accession>
<feature type="chain" id="PRO_1000122398" description="Large ribosomal subunit protein bL20">
    <location>
        <begin position="1"/>
        <end position="118"/>
    </location>
</feature>